<gene>
    <name evidence="1" type="primary">moaC</name>
    <name type="ordered locus">CHY_0803</name>
</gene>
<comment type="function">
    <text evidence="1">Catalyzes the conversion of (8S)-3',8-cyclo-7,8-dihydroguanosine 5'-triphosphate to cyclic pyranopterin monophosphate (cPMP).</text>
</comment>
<comment type="catalytic activity">
    <reaction evidence="1">
        <text>(8S)-3',8-cyclo-7,8-dihydroguanosine 5'-triphosphate = cyclic pyranopterin phosphate + diphosphate</text>
        <dbReference type="Rhea" id="RHEA:49580"/>
        <dbReference type="ChEBI" id="CHEBI:33019"/>
        <dbReference type="ChEBI" id="CHEBI:59648"/>
        <dbReference type="ChEBI" id="CHEBI:131766"/>
        <dbReference type="EC" id="4.6.1.17"/>
    </reaction>
</comment>
<comment type="pathway">
    <text evidence="1">Cofactor biosynthesis; molybdopterin biosynthesis.</text>
</comment>
<comment type="subunit">
    <text evidence="1">Homohexamer; trimer of dimers.</text>
</comment>
<comment type="similarity">
    <text evidence="1">Belongs to the MoaC family.</text>
</comment>
<sequence>MELTHFNEEGRARMVEVTEKQETVRTAVAAGEITMRPETLELILDKKVAKGDVLAVAQVAGIMAAKKTGDLIPMCHPLNLTGVDISFTIKVPDTIEAKAKVTCVGKTGVEMEALTAVSVTLLTIYDMVKAVEKGMVIKNIRLLEKTGGKSGDYRREE</sequence>
<reference key="1">
    <citation type="journal article" date="2005" name="PLoS Genet.">
        <title>Life in hot carbon monoxide: the complete genome sequence of Carboxydothermus hydrogenoformans Z-2901.</title>
        <authorList>
            <person name="Wu M."/>
            <person name="Ren Q."/>
            <person name="Durkin A.S."/>
            <person name="Daugherty S.C."/>
            <person name="Brinkac L.M."/>
            <person name="Dodson R.J."/>
            <person name="Madupu R."/>
            <person name="Sullivan S.A."/>
            <person name="Kolonay J.F."/>
            <person name="Nelson W.C."/>
            <person name="Tallon L.J."/>
            <person name="Jones K.M."/>
            <person name="Ulrich L.E."/>
            <person name="Gonzalez J.M."/>
            <person name="Zhulin I.B."/>
            <person name="Robb F.T."/>
            <person name="Eisen J.A."/>
        </authorList>
    </citation>
    <scope>NUCLEOTIDE SEQUENCE [LARGE SCALE GENOMIC DNA]</scope>
    <source>
        <strain>ATCC BAA-161 / DSM 6008 / Z-2901</strain>
    </source>
</reference>
<feature type="chain" id="PRO_1000054084" description="Cyclic pyranopterin monophosphate synthase">
    <location>
        <begin position="1"/>
        <end position="157"/>
    </location>
</feature>
<feature type="active site" evidence="1">
    <location>
        <position position="126"/>
    </location>
</feature>
<feature type="binding site" evidence="1">
    <location>
        <begin position="74"/>
        <end position="76"/>
    </location>
    <ligand>
        <name>substrate</name>
    </ligand>
</feature>
<feature type="binding site" evidence="1">
    <location>
        <begin position="111"/>
        <end position="112"/>
    </location>
    <ligand>
        <name>substrate</name>
    </ligand>
</feature>
<dbReference type="EC" id="4.6.1.17" evidence="1"/>
<dbReference type="EMBL" id="CP000141">
    <property type="protein sequence ID" value="ABB15105.1"/>
    <property type="molecule type" value="Genomic_DNA"/>
</dbReference>
<dbReference type="RefSeq" id="WP_011343733.1">
    <property type="nucleotide sequence ID" value="NC_007503.1"/>
</dbReference>
<dbReference type="SMR" id="Q3ADX7"/>
<dbReference type="FunCoup" id="Q3ADX7">
    <property type="interactions" value="323"/>
</dbReference>
<dbReference type="STRING" id="246194.CHY_0803"/>
<dbReference type="KEGG" id="chy:CHY_0803"/>
<dbReference type="eggNOG" id="COG0315">
    <property type="taxonomic scope" value="Bacteria"/>
</dbReference>
<dbReference type="HOGENOM" id="CLU_074693_1_1_9"/>
<dbReference type="InParanoid" id="Q3ADX7"/>
<dbReference type="OrthoDB" id="9794429at2"/>
<dbReference type="UniPathway" id="UPA00344"/>
<dbReference type="Proteomes" id="UP000002706">
    <property type="component" value="Chromosome"/>
</dbReference>
<dbReference type="GO" id="GO:0061799">
    <property type="term" value="F:cyclic pyranopterin monophosphate synthase activity"/>
    <property type="evidence" value="ECO:0007669"/>
    <property type="project" value="UniProtKB-UniRule"/>
</dbReference>
<dbReference type="GO" id="GO:0006777">
    <property type="term" value="P:Mo-molybdopterin cofactor biosynthetic process"/>
    <property type="evidence" value="ECO:0007669"/>
    <property type="project" value="UniProtKB-UniRule"/>
</dbReference>
<dbReference type="CDD" id="cd01420">
    <property type="entry name" value="MoaC_PE"/>
    <property type="match status" value="1"/>
</dbReference>
<dbReference type="Gene3D" id="3.30.70.640">
    <property type="entry name" value="Molybdopterin cofactor biosynthesis C (MoaC) domain"/>
    <property type="match status" value="1"/>
</dbReference>
<dbReference type="HAMAP" id="MF_01224_B">
    <property type="entry name" value="MoaC_B"/>
    <property type="match status" value="1"/>
</dbReference>
<dbReference type="InterPro" id="IPR023045">
    <property type="entry name" value="MoaC"/>
</dbReference>
<dbReference type="InterPro" id="IPR047594">
    <property type="entry name" value="MoaC_bact/euk"/>
</dbReference>
<dbReference type="InterPro" id="IPR036522">
    <property type="entry name" value="MoaC_sf"/>
</dbReference>
<dbReference type="InterPro" id="IPR050105">
    <property type="entry name" value="MoCo_biosynth_MoaA/MoaC"/>
</dbReference>
<dbReference type="InterPro" id="IPR002820">
    <property type="entry name" value="Mopterin_CF_biosynth-C_dom"/>
</dbReference>
<dbReference type="NCBIfam" id="TIGR00581">
    <property type="entry name" value="moaC"/>
    <property type="match status" value="1"/>
</dbReference>
<dbReference type="NCBIfam" id="NF006870">
    <property type="entry name" value="PRK09364.1"/>
    <property type="match status" value="1"/>
</dbReference>
<dbReference type="PANTHER" id="PTHR22960:SF29">
    <property type="entry name" value="CYCLIC PYRANOPTERIN MONOPHOSPHATE SYNTHASE"/>
    <property type="match status" value="1"/>
</dbReference>
<dbReference type="PANTHER" id="PTHR22960">
    <property type="entry name" value="MOLYBDOPTERIN COFACTOR SYNTHESIS PROTEIN A"/>
    <property type="match status" value="1"/>
</dbReference>
<dbReference type="Pfam" id="PF01967">
    <property type="entry name" value="MoaC"/>
    <property type="match status" value="1"/>
</dbReference>
<dbReference type="SUPFAM" id="SSF55040">
    <property type="entry name" value="Molybdenum cofactor biosynthesis protein C, MoaC"/>
    <property type="match status" value="1"/>
</dbReference>
<protein>
    <recommendedName>
        <fullName evidence="1">Cyclic pyranopterin monophosphate synthase</fullName>
        <ecNumber evidence="1">4.6.1.17</ecNumber>
    </recommendedName>
    <alternativeName>
        <fullName evidence="1">Molybdenum cofactor biosynthesis protein C</fullName>
    </alternativeName>
</protein>
<keyword id="KW-0456">Lyase</keyword>
<keyword id="KW-0501">Molybdenum cofactor biosynthesis</keyword>
<keyword id="KW-1185">Reference proteome</keyword>
<name>MOAC_CARHZ</name>
<evidence type="ECO:0000255" key="1">
    <source>
        <dbReference type="HAMAP-Rule" id="MF_01224"/>
    </source>
</evidence>
<organism>
    <name type="scientific">Carboxydothermus hydrogenoformans (strain ATCC BAA-161 / DSM 6008 / Z-2901)</name>
    <dbReference type="NCBI Taxonomy" id="246194"/>
    <lineage>
        <taxon>Bacteria</taxon>
        <taxon>Bacillati</taxon>
        <taxon>Bacillota</taxon>
        <taxon>Clostridia</taxon>
        <taxon>Thermoanaerobacterales</taxon>
        <taxon>Thermoanaerobacteraceae</taxon>
        <taxon>Carboxydothermus</taxon>
    </lineage>
</organism>
<accession>Q3ADX7</accession>
<proteinExistence type="inferred from homology"/>